<dbReference type="EC" id="2.7.7.13"/>
<dbReference type="EMBL" id="AF030299">
    <property type="protein sequence ID" value="AAC64911.1"/>
    <property type="molecule type" value="Genomic_DNA"/>
</dbReference>
<dbReference type="EMBL" id="AF030300">
    <property type="protein sequence ID" value="AAC64912.1"/>
    <property type="molecule type" value="Genomic_DNA"/>
</dbReference>
<dbReference type="EMBL" id="AB020596">
    <property type="protein sequence ID" value="BAA34807.1"/>
    <property type="molecule type" value="Genomic_DNA"/>
</dbReference>
<dbReference type="EMBL" id="CP017625">
    <property type="protein sequence ID" value="AOW28792.1"/>
    <property type="molecule type" value="Genomic_DNA"/>
</dbReference>
<dbReference type="RefSeq" id="XP_710946.1">
    <property type="nucleotide sequence ID" value="XM_705854.1"/>
</dbReference>
<dbReference type="SMR" id="O93827"/>
<dbReference type="BioGRID" id="1230547">
    <property type="interactions" value="3"/>
</dbReference>
<dbReference type="FunCoup" id="O93827">
    <property type="interactions" value="1505"/>
</dbReference>
<dbReference type="STRING" id="237561.O93827"/>
<dbReference type="EnsemblFungi" id="C3_07950C_A-T">
    <property type="protein sequence ID" value="C3_07950C_A-T-p1"/>
    <property type="gene ID" value="C3_07950C_A"/>
</dbReference>
<dbReference type="GeneID" id="3647454"/>
<dbReference type="KEGG" id="cal:CAALFM_C307950CA"/>
<dbReference type="CGD" id="CAL0000178573">
    <property type="gene designation" value="SRB1"/>
</dbReference>
<dbReference type="VEuPathDB" id="FungiDB:C3_07950C_A"/>
<dbReference type="eggNOG" id="KOG1322">
    <property type="taxonomic scope" value="Eukaryota"/>
</dbReference>
<dbReference type="HOGENOM" id="CLU_029499_0_0_1"/>
<dbReference type="InParanoid" id="O93827"/>
<dbReference type="OMA" id="GPNCWIC"/>
<dbReference type="OrthoDB" id="1733332at2759"/>
<dbReference type="BRENDA" id="2.7.7.13">
    <property type="organism ID" value="1096"/>
</dbReference>
<dbReference type="UniPathway" id="UPA00126">
    <property type="reaction ID" value="UER00930"/>
</dbReference>
<dbReference type="Proteomes" id="UP000000559">
    <property type="component" value="Chromosome 3"/>
</dbReference>
<dbReference type="GO" id="GO:0009986">
    <property type="term" value="C:cell surface"/>
    <property type="evidence" value="ECO:0000314"/>
    <property type="project" value="CGD"/>
</dbReference>
<dbReference type="GO" id="GO:0005737">
    <property type="term" value="C:cytoplasm"/>
    <property type="evidence" value="ECO:0000318"/>
    <property type="project" value="GO_Central"/>
</dbReference>
<dbReference type="GO" id="GO:0005886">
    <property type="term" value="C:plasma membrane"/>
    <property type="evidence" value="ECO:0000314"/>
    <property type="project" value="CGD"/>
</dbReference>
<dbReference type="GO" id="GO:0030445">
    <property type="term" value="C:yeast-form cell wall"/>
    <property type="evidence" value="ECO:0000314"/>
    <property type="project" value="CGD"/>
</dbReference>
<dbReference type="GO" id="GO:0005525">
    <property type="term" value="F:GTP binding"/>
    <property type="evidence" value="ECO:0007669"/>
    <property type="project" value="UniProtKB-KW"/>
</dbReference>
<dbReference type="GO" id="GO:0004475">
    <property type="term" value="F:mannose-1-phosphate guanylyltransferase (GTP) activity"/>
    <property type="evidence" value="ECO:0000314"/>
    <property type="project" value="CGD"/>
</dbReference>
<dbReference type="GO" id="GO:0000032">
    <property type="term" value="P:cell wall mannoprotein biosynthetic process"/>
    <property type="evidence" value="ECO:0000316"/>
    <property type="project" value="CGD"/>
</dbReference>
<dbReference type="GO" id="GO:0009298">
    <property type="term" value="P:GDP-mannose biosynthetic process"/>
    <property type="evidence" value="ECO:0000314"/>
    <property type="project" value="CGD"/>
</dbReference>
<dbReference type="GO" id="GO:0006486">
    <property type="term" value="P:protein glycosylation"/>
    <property type="evidence" value="ECO:0000318"/>
    <property type="project" value="GO_Central"/>
</dbReference>
<dbReference type="CDD" id="cd06425">
    <property type="entry name" value="M1P_guanylylT_B_like_N"/>
    <property type="match status" value="1"/>
</dbReference>
<dbReference type="FunFam" id="2.160.10.10:FF:000017">
    <property type="entry name" value="Mannose-1-phosphate guanyltransferase"/>
    <property type="match status" value="1"/>
</dbReference>
<dbReference type="FunFam" id="3.90.550.10:FF:000013">
    <property type="entry name" value="mannose-1-phosphate guanyltransferase beta"/>
    <property type="match status" value="1"/>
</dbReference>
<dbReference type="Gene3D" id="2.160.10.10">
    <property type="entry name" value="Hexapeptide repeat proteins"/>
    <property type="match status" value="1"/>
</dbReference>
<dbReference type="Gene3D" id="3.90.550.10">
    <property type="entry name" value="Spore Coat Polysaccharide Biosynthesis Protein SpsA, Chain A"/>
    <property type="match status" value="1"/>
</dbReference>
<dbReference type="InterPro" id="IPR056729">
    <property type="entry name" value="GMPPB_C"/>
</dbReference>
<dbReference type="InterPro" id="IPR045233">
    <property type="entry name" value="GMPPB_N"/>
</dbReference>
<dbReference type="InterPro" id="IPR050486">
    <property type="entry name" value="Mannose-1P_guanyltransferase"/>
</dbReference>
<dbReference type="InterPro" id="IPR005835">
    <property type="entry name" value="NTP_transferase_dom"/>
</dbReference>
<dbReference type="InterPro" id="IPR029044">
    <property type="entry name" value="Nucleotide-diphossugar_trans"/>
</dbReference>
<dbReference type="PANTHER" id="PTHR22572">
    <property type="entry name" value="SUGAR-1-PHOSPHATE GUANYL TRANSFERASE"/>
    <property type="match status" value="1"/>
</dbReference>
<dbReference type="Pfam" id="PF25087">
    <property type="entry name" value="GMPPB_C"/>
    <property type="match status" value="1"/>
</dbReference>
<dbReference type="Pfam" id="PF00483">
    <property type="entry name" value="NTP_transferase"/>
    <property type="match status" value="1"/>
</dbReference>
<dbReference type="SUPFAM" id="SSF53448">
    <property type="entry name" value="Nucleotide-diphospho-sugar transferases"/>
    <property type="match status" value="1"/>
</dbReference>
<accession>O93827</accession>
<accession>A0A1D8PKY0</accession>
<accession>Q59MI2</accession>
<name>MPG1_CANAL</name>
<proteinExistence type="evidence at protein level"/>
<keyword id="KW-0131">Cell cycle</keyword>
<keyword id="KW-0963">Cytoplasm</keyword>
<keyword id="KW-0342">GTP-binding</keyword>
<keyword id="KW-0547">Nucleotide-binding</keyword>
<keyword id="KW-0548">Nucleotidyltransferase</keyword>
<keyword id="KW-1185">Reference proteome</keyword>
<keyword id="KW-0808">Transferase</keyword>
<protein>
    <recommendedName>
        <fullName>Mannose-1-phosphate guanyltransferase</fullName>
        <ecNumber>2.7.7.13</ecNumber>
    </recommendedName>
    <alternativeName>
        <fullName>ATP-mannose-1-phosphate guanylyltransferase</fullName>
    </alternativeName>
    <alternativeName>
        <fullName>CASRB1</fullName>
    </alternativeName>
    <alternativeName>
        <fullName>GDP-mannose pyrophosphorylase</fullName>
    </alternativeName>
</protein>
<reference key="1">
    <citation type="journal article" date="1998" name="Microbiology">
        <title>Cloning and sequencing of the Candida albicans homologue of SRB1/PSA1/VIG9, the essential gene encoding GDP-mannose pyrophosphorylase in Saccharomyces cerevisiae.</title>
        <authorList>
            <person name="Warit S."/>
            <person name="Walmsley R.M."/>
            <person name="Stateva L.I."/>
        </authorList>
    </citation>
    <scope>NUCLEOTIDE SEQUENCE [GENOMIC DNA]</scope>
    <source>
        <strain>1161</strain>
    </source>
</reference>
<reference key="2">
    <citation type="journal article" date="2000" name="Biochim. Biophys. Acta">
        <title>The VIG9 gene products from the human pathogenic fungi Candida albicans and Candida glabrata encode GDP-mannose pyrophosphorylase.</title>
        <authorList>
            <person name="Ohta A."/>
            <person name="Chibana H."/>
            <person name="Arisawa M."/>
            <person name="Sudoh M."/>
        </authorList>
    </citation>
    <scope>NUCLEOTIDE SEQUENCE [GENOMIC DNA]</scope>
    <scope>CATALYTIC ACTIVITY</scope>
    <source>
        <strain>ATCC 10259 / CBS 5796 / DSM 5817 / JCM 2078 / NBRC 1060</strain>
    </source>
</reference>
<reference key="3">
    <citation type="journal article" date="2004" name="Proc. Natl. Acad. Sci. U.S.A.">
        <title>The diploid genome sequence of Candida albicans.</title>
        <authorList>
            <person name="Jones T."/>
            <person name="Federspiel N.A."/>
            <person name="Chibana H."/>
            <person name="Dungan J."/>
            <person name="Kalman S."/>
            <person name="Magee B.B."/>
            <person name="Newport G."/>
            <person name="Thorstenson Y.R."/>
            <person name="Agabian N."/>
            <person name="Magee P.T."/>
            <person name="Davis R.W."/>
            <person name="Scherer S."/>
        </authorList>
    </citation>
    <scope>NUCLEOTIDE SEQUENCE [LARGE SCALE GENOMIC DNA]</scope>
    <source>
        <strain>SC5314 / ATCC MYA-2876</strain>
    </source>
</reference>
<reference key="4">
    <citation type="journal article" date="2007" name="Genome Biol.">
        <title>Assembly of the Candida albicans genome into sixteen supercontigs aligned on the eight chromosomes.</title>
        <authorList>
            <person name="van het Hoog M."/>
            <person name="Rast T.J."/>
            <person name="Martchenko M."/>
            <person name="Grindle S."/>
            <person name="Dignard D."/>
            <person name="Hogues H."/>
            <person name="Cuomo C."/>
            <person name="Berriman M."/>
            <person name="Scherer S."/>
            <person name="Magee B.B."/>
            <person name="Whiteway M."/>
            <person name="Chibana H."/>
            <person name="Nantel A."/>
            <person name="Magee P.T."/>
        </authorList>
    </citation>
    <scope>GENOME REANNOTATION</scope>
    <source>
        <strain>SC5314 / ATCC MYA-2876</strain>
    </source>
</reference>
<reference key="5">
    <citation type="journal article" date="2013" name="Genome Biol.">
        <title>Assembly of a phased diploid Candida albicans genome facilitates allele-specific measurements and provides a simple model for repeat and indel structure.</title>
        <authorList>
            <person name="Muzzey D."/>
            <person name="Schwartz K."/>
            <person name="Weissman J.S."/>
            <person name="Sherlock G."/>
        </authorList>
    </citation>
    <scope>NUCLEOTIDE SEQUENCE [LARGE SCALE GENOMIC DNA]</scope>
    <scope>GENOME REANNOTATION</scope>
    <source>
        <strain>SC5314 / ATCC MYA-2876</strain>
    </source>
</reference>
<sequence length="362" mass="39975">MKGLILVGGYGTRLRPLTLTLPKPLVEFGNRPMILHQIEALAAAGVTDIVLAVNYRPEVMVSTLKKYEEEYGVSITFSVEEEPLGTAGPLKLAEEVLKKDDSPFFVLNSDVICDYPFKELADFHKAHGAAGTIVATKVDEPSKYGVIVHDRDTPNLIDRFVEKPVEFVGNRINAGLYILNPSVIDLIEMRPTSIEKETFPILVEQKQLYSFDLEGYWMDVGQPKDFLSGTCLYLTSLSKKHPEKLCKEKYVHGGNVLIDPTAKIHPSALIGPNVTIGPNVVVGEGARIQRSVLLANSQVKDHAWVKSTIVGWNSRIGKWARTEGVTVLGDDVEVKNEIYVNGAKVLPHKSISSNVEKESIIM</sequence>
<feature type="chain" id="PRO_0000068739" description="Mannose-1-phosphate guanyltransferase">
    <location>
        <begin position="1"/>
        <end position="362"/>
    </location>
</feature>
<feature type="sequence variant" description="In strain: 1161.">
    <original>ET</original>
    <variation>DP</variation>
    <location>
        <begin position="197"/>
        <end position="198"/>
    </location>
</feature>
<feature type="sequence variant" description="In strain: 1161.">
    <original>E</original>
    <variation>Q</variation>
    <location>
        <position position="333"/>
    </location>
</feature>
<feature type="sequence conflict" description="In Ref. 1; AAC64912." evidence="3" ref="1">
    <original>Q</original>
    <variation>R</variation>
    <location>
        <position position="289"/>
    </location>
</feature>
<gene>
    <name type="primary">MPG1</name>
    <name type="synonym">SRB1</name>
    <name type="synonym">VIG9</name>
    <name type="ordered locus">CAALFM_C307950CA</name>
    <name type="ORF">CaO19.6190</name>
</gene>
<comment type="function">
    <text evidence="1">Involved in cell wall synthesis where it is required for glycosylation. Involved in cell cycle progression through cell-size checkpoint (By similarity).</text>
</comment>
<comment type="catalytic activity">
    <reaction evidence="2">
        <text>alpha-D-mannose 1-phosphate + GTP + H(+) = GDP-alpha-D-mannose + diphosphate</text>
        <dbReference type="Rhea" id="RHEA:15229"/>
        <dbReference type="ChEBI" id="CHEBI:15378"/>
        <dbReference type="ChEBI" id="CHEBI:33019"/>
        <dbReference type="ChEBI" id="CHEBI:37565"/>
        <dbReference type="ChEBI" id="CHEBI:57527"/>
        <dbReference type="ChEBI" id="CHEBI:58409"/>
        <dbReference type="EC" id="2.7.7.13"/>
    </reaction>
</comment>
<comment type="pathway">
    <text>Nucleotide-sugar biosynthesis; GDP-alpha-D-mannose biosynthesis; GDP-alpha-D-mannose from alpha-D-mannose 1-phosphate (GTP route): step 1/1.</text>
</comment>
<comment type="subcellular location">
    <subcellularLocation>
        <location evidence="1">Cytoplasm</location>
    </subcellularLocation>
</comment>
<comment type="similarity">
    <text evidence="3">Belongs to the transferase hexapeptide repeat family.</text>
</comment>
<evidence type="ECO:0000250" key="1"/>
<evidence type="ECO:0000269" key="2">
    <source>
    </source>
</evidence>
<evidence type="ECO:0000305" key="3"/>
<organism>
    <name type="scientific">Candida albicans (strain SC5314 / ATCC MYA-2876)</name>
    <name type="common">Yeast</name>
    <dbReference type="NCBI Taxonomy" id="237561"/>
    <lineage>
        <taxon>Eukaryota</taxon>
        <taxon>Fungi</taxon>
        <taxon>Dikarya</taxon>
        <taxon>Ascomycota</taxon>
        <taxon>Saccharomycotina</taxon>
        <taxon>Pichiomycetes</taxon>
        <taxon>Debaryomycetaceae</taxon>
        <taxon>Candida/Lodderomyces clade</taxon>
        <taxon>Candida</taxon>
    </lineage>
</organism>